<feature type="chain" id="PRO_0000378437" description="Protein argonaute 14">
    <location>
        <begin position="1"/>
        <end position="1052"/>
    </location>
</feature>
<feature type="domain" description="PAZ" evidence="2">
    <location>
        <begin position="394"/>
        <end position="510"/>
    </location>
</feature>
<feature type="domain" description="Piwi" evidence="3">
    <location>
        <begin position="677"/>
        <end position="1009"/>
    </location>
</feature>
<feature type="region of interest" description="Disordered" evidence="4">
    <location>
        <begin position="1"/>
        <end position="127"/>
    </location>
</feature>
<feature type="region of interest" description="Disordered" evidence="4">
    <location>
        <begin position="170"/>
        <end position="194"/>
    </location>
</feature>
<feature type="compositionally biased region" description="Gly residues" evidence="4">
    <location>
        <begin position="1"/>
        <end position="39"/>
    </location>
</feature>
<feature type="compositionally biased region" description="Low complexity" evidence="4">
    <location>
        <begin position="40"/>
        <end position="49"/>
    </location>
</feature>
<feature type="compositionally biased region" description="Gly residues" evidence="4">
    <location>
        <begin position="50"/>
        <end position="59"/>
    </location>
</feature>
<feature type="compositionally biased region" description="Gly residues" evidence="4">
    <location>
        <begin position="66"/>
        <end position="81"/>
    </location>
</feature>
<feature type="compositionally biased region" description="Low complexity" evidence="4">
    <location>
        <begin position="97"/>
        <end position="117"/>
    </location>
</feature>
<feature type="compositionally biased region" description="Pro residues" evidence="4">
    <location>
        <begin position="173"/>
        <end position="183"/>
    </location>
</feature>
<proteinExistence type="evidence at transcript level"/>
<accession>Q6Z4F1</accession>
<accession>A0A0P0X377</accession>
<keyword id="KW-1185">Reference proteome</keyword>
<keyword id="KW-0943">RNA-mediated gene silencing</keyword>
<organism>
    <name type="scientific">Oryza sativa subsp. japonica</name>
    <name type="common">Rice</name>
    <dbReference type="NCBI Taxonomy" id="39947"/>
    <lineage>
        <taxon>Eukaryota</taxon>
        <taxon>Viridiplantae</taxon>
        <taxon>Streptophyta</taxon>
        <taxon>Embryophyta</taxon>
        <taxon>Tracheophyta</taxon>
        <taxon>Spermatophyta</taxon>
        <taxon>Magnoliopsida</taxon>
        <taxon>Liliopsida</taxon>
        <taxon>Poales</taxon>
        <taxon>Poaceae</taxon>
        <taxon>BOP clade</taxon>
        <taxon>Oryzoideae</taxon>
        <taxon>Oryzeae</taxon>
        <taxon>Oryzinae</taxon>
        <taxon>Oryza</taxon>
        <taxon>Oryza sativa</taxon>
    </lineage>
</organism>
<dbReference type="EMBL" id="AP005179">
    <property type="protein sequence ID" value="BAC83909.1"/>
    <property type="molecule type" value="Genomic_DNA"/>
</dbReference>
<dbReference type="EMBL" id="AP005877">
    <property type="protein sequence ID" value="BAD31843.1"/>
    <property type="molecule type" value="Genomic_DNA"/>
</dbReference>
<dbReference type="EMBL" id="AP008213">
    <property type="protein sequence ID" value="BAF20993.1"/>
    <property type="molecule type" value="Genomic_DNA"/>
</dbReference>
<dbReference type="EMBL" id="AP014963">
    <property type="protein sequence ID" value="BAT00388.1"/>
    <property type="molecule type" value="Genomic_DNA"/>
</dbReference>
<dbReference type="EMBL" id="AK100285">
    <property type="protein sequence ID" value="BAG94531.1"/>
    <property type="molecule type" value="mRNA"/>
</dbReference>
<dbReference type="RefSeq" id="XP_015645442.1">
    <property type="nucleotide sequence ID" value="XM_015789956.1"/>
</dbReference>
<dbReference type="SMR" id="Q6Z4F1"/>
<dbReference type="FunCoup" id="Q6Z4F1">
    <property type="interactions" value="1860"/>
</dbReference>
<dbReference type="STRING" id="39947.Q6Z4F1"/>
<dbReference type="PaxDb" id="39947-Q6Z4F1"/>
<dbReference type="EnsemblPlants" id="Os07t0188000-01">
    <property type="protein sequence ID" value="Os07t0188000-01"/>
    <property type="gene ID" value="Os07g0188000"/>
</dbReference>
<dbReference type="Gramene" id="Os07t0188000-01">
    <property type="protein sequence ID" value="Os07t0188000-01"/>
    <property type="gene ID" value="Os07g0188000"/>
</dbReference>
<dbReference type="KEGG" id="dosa:Os07g0188000"/>
<dbReference type="eggNOG" id="KOG1041">
    <property type="taxonomic scope" value="Eukaryota"/>
</dbReference>
<dbReference type="HOGENOM" id="CLU_004544_0_0_1"/>
<dbReference type="InParanoid" id="Q6Z4F1"/>
<dbReference type="OMA" id="FSRMHID"/>
<dbReference type="OrthoDB" id="10252740at2759"/>
<dbReference type="Proteomes" id="UP000000763">
    <property type="component" value="Chromosome 7"/>
</dbReference>
<dbReference type="Proteomes" id="UP000059680">
    <property type="component" value="Chromosome 7"/>
</dbReference>
<dbReference type="GO" id="GO:0005737">
    <property type="term" value="C:cytoplasm"/>
    <property type="evidence" value="ECO:0000318"/>
    <property type="project" value="GO_Central"/>
</dbReference>
<dbReference type="GO" id="GO:0005634">
    <property type="term" value="C:nucleus"/>
    <property type="evidence" value="ECO:0000318"/>
    <property type="project" value="GO_Central"/>
</dbReference>
<dbReference type="GO" id="GO:0003723">
    <property type="term" value="F:RNA binding"/>
    <property type="evidence" value="ECO:0000318"/>
    <property type="project" value="GO_Central"/>
</dbReference>
<dbReference type="GO" id="GO:0004521">
    <property type="term" value="F:RNA endonuclease activity"/>
    <property type="evidence" value="ECO:0000318"/>
    <property type="project" value="GO_Central"/>
</dbReference>
<dbReference type="GO" id="GO:0031047">
    <property type="term" value="P:regulatory ncRNA-mediated gene silencing"/>
    <property type="evidence" value="ECO:0000318"/>
    <property type="project" value="GO_Central"/>
</dbReference>
<dbReference type="CDD" id="cd02846">
    <property type="entry name" value="PAZ_argonaute_like"/>
    <property type="match status" value="1"/>
</dbReference>
<dbReference type="CDD" id="cd04657">
    <property type="entry name" value="Piwi_ago-like"/>
    <property type="match status" value="1"/>
</dbReference>
<dbReference type="FunFam" id="3.40.50.2300:FF:000110">
    <property type="entry name" value="Argonaute 10"/>
    <property type="match status" value="1"/>
</dbReference>
<dbReference type="FunFam" id="3.30.420.10:FF:000013">
    <property type="entry name" value="protein argonaute 10-like"/>
    <property type="match status" value="1"/>
</dbReference>
<dbReference type="Gene3D" id="3.40.50.2300">
    <property type="match status" value="1"/>
</dbReference>
<dbReference type="Gene3D" id="2.170.260.10">
    <property type="entry name" value="paz domain"/>
    <property type="match status" value="1"/>
</dbReference>
<dbReference type="Gene3D" id="3.30.420.10">
    <property type="entry name" value="Ribonuclease H-like superfamily/Ribonuclease H"/>
    <property type="match status" value="1"/>
</dbReference>
<dbReference type="InterPro" id="IPR014811">
    <property type="entry name" value="ArgoL1"/>
</dbReference>
<dbReference type="InterPro" id="IPR032472">
    <property type="entry name" value="ArgoL2"/>
</dbReference>
<dbReference type="InterPro" id="IPR032473">
    <property type="entry name" value="Argonaute_Mid_dom"/>
</dbReference>
<dbReference type="InterPro" id="IPR032474">
    <property type="entry name" value="Argonaute_N"/>
</dbReference>
<dbReference type="InterPro" id="IPR003100">
    <property type="entry name" value="PAZ_dom"/>
</dbReference>
<dbReference type="InterPro" id="IPR036085">
    <property type="entry name" value="PAZ_dom_sf"/>
</dbReference>
<dbReference type="InterPro" id="IPR003165">
    <property type="entry name" value="Piwi"/>
</dbReference>
<dbReference type="InterPro" id="IPR045246">
    <property type="entry name" value="Piwi_ago-like"/>
</dbReference>
<dbReference type="InterPro" id="IPR012337">
    <property type="entry name" value="RNaseH-like_sf"/>
</dbReference>
<dbReference type="InterPro" id="IPR036397">
    <property type="entry name" value="RNaseH_sf"/>
</dbReference>
<dbReference type="PANTHER" id="PTHR22891">
    <property type="entry name" value="EUKARYOTIC TRANSLATION INITIATION FACTOR 2C"/>
    <property type="match status" value="1"/>
</dbReference>
<dbReference type="Pfam" id="PF08699">
    <property type="entry name" value="ArgoL1"/>
    <property type="match status" value="1"/>
</dbReference>
<dbReference type="Pfam" id="PF16488">
    <property type="entry name" value="ArgoL2"/>
    <property type="match status" value="1"/>
</dbReference>
<dbReference type="Pfam" id="PF16487">
    <property type="entry name" value="ArgoMid"/>
    <property type="match status" value="1"/>
</dbReference>
<dbReference type="Pfam" id="PF16486">
    <property type="entry name" value="ArgoN"/>
    <property type="match status" value="1"/>
</dbReference>
<dbReference type="Pfam" id="PF02170">
    <property type="entry name" value="PAZ"/>
    <property type="match status" value="1"/>
</dbReference>
<dbReference type="Pfam" id="PF02171">
    <property type="entry name" value="Piwi"/>
    <property type="match status" value="1"/>
</dbReference>
<dbReference type="SMART" id="SM01163">
    <property type="entry name" value="DUF1785"/>
    <property type="match status" value="1"/>
</dbReference>
<dbReference type="SMART" id="SM00949">
    <property type="entry name" value="PAZ"/>
    <property type="match status" value="1"/>
</dbReference>
<dbReference type="SMART" id="SM00950">
    <property type="entry name" value="Piwi"/>
    <property type="match status" value="1"/>
</dbReference>
<dbReference type="SUPFAM" id="SSF101690">
    <property type="entry name" value="PAZ domain"/>
    <property type="match status" value="1"/>
</dbReference>
<dbReference type="SUPFAM" id="SSF53098">
    <property type="entry name" value="Ribonuclease H-like"/>
    <property type="match status" value="1"/>
</dbReference>
<dbReference type="PROSITE" id="PS50821">
    <property type="entry name" value="PAZ"/>
    <property type="match status" value="1"/>
</dbReference>
<dbReference type="PROSITE" id="PS50822">
    <property type="entry name" value="PIWI"/>
    <property type="match status" value="1"/>
</dbReference>
<evidence type="ECO:0000250" key="1"/>
<evidence type="ECO:0000255" key="2">
    <source>
        <dbReference type="PROSITE-ProRule" id="PRU00142"/>
    </source>
</evidence>
<evidence type="ECO:0000255" key="3">
    <source>
        <dbReference type="PROSITE-ProRule" id="PRU00150"/>
    </source>
</evidence>
<evidence type="ECO:0000256" key="4">
    <source>
        <dbReference type="SAM" id="MobiDB-lite"/>
    </source>
</evidence>
<evidence type="ECO:0000269" key="5">
    <source>
    </source>
</evidence>
<evidence type="ECO:0000305" key="6"/>
<protein>
    <recommendedName>
        <fullName>Protein argonaute 14</fullName>
        <shortName>OsAGO14</shortName>
    </recommendedName>
</protein>
<gene>
    <name type="primary">AGO14</name>
    <name type="ordered locus">Os07g0188000</name>
    <name type="ordered locus">LOC_Os07g09020</name>
    <name type="ORF">OSJNBb0002L09.2</name>
    <name type="ORF">OSJNBb0084L07.14</name>
</gene>
<reference key="1">
    <citation type="journal article" date="2005" name="Nature">
        <title>The map-based sequence of the rice genome.</title>
        <authorList>
            <consortium name="International rice genome sequencing project (IRGSP)"/>
        </authorList>
    </citation>
    <scope>NUCLEOTIDE SEQUENCE [LARGE SCALE GENOMIC DNA]</scope>
    <source>
        <strain>cv. Nipponbare</strain>
    </source>
</reference>
<reference key="2">
    <citation type="journal article" date="2008" name="Nucleic Acids Res.">
        <title>The rice annotation project database (RAP-DB): 2008 update.</title>
        <authorList>
            <consortium name="The rice annotation project (RAP)"/>
        </authorList>
    </citation>
    <scope>GENOME REANNOTATION</scope>
    <source>
        <strain>cv. Nipponbare</strain>
    </source>
</reference>
<reference key="3">
    <citation type="journal article" date="2013" name="Rice">
        <title>Improvement of the Oryza sativa Nipponbare reference genome using next generation sequence and optical map data.</title>
        <authorList>
            <person name="Kawahara Y."/>
            <person name="de la Bastide M."/>
            <person name="Hamilton J.P."/>
            <person name="Kanamori H."/>
            <person name="McCombie W.R."/>
            <person name="Ouyang S."/>
            <person name="Schwartz D.C."/>
            <person name="Tanaka T."/>
            <person name="Wu J."/>
            <person name="Zhou S."/>
            <person name="Childs K.L."/>
            <person name="Davidson R.M."/>
            <person name="Lin H."/>
            <person name="Quesada-Ocampo L."/>
            <person name="Vaillancourt B."/>
            <person name="Sakai H."/>
            <person name="Lee S.S."/>
            <person name="Kim J."/>
            <person name="Numa H."/>
            <person name="Itoh T."/>
            <person name="Buell C.R."/>
            <person name="Matsumoto T."/>
        </authorList>
    </citation>
    <scope>GENOME REANNOTATION</scope>
    <source>
        <strain>cv. Nipponbare</strain>
    </source>
</reference>
<reference key="4">
    <citation type="journal article" date="2003" name="Science">
        <title>Collection, mapping, and annotation of over 28,000 cDNA clones from japonica rice.</title>
        <authorList>
            <consortium name="The rice full-length cDNA consortium"/>
        </authorList>
    </citation>
    <scope>NUCLEOTIDE SEQUENCE [LARGE SCALE MRNA]</scope>
    <source>
        <strain>cv. Nipponbare</strain>
    </source>
</reference>
<reference key="5">
    <citation type="journal article" date="2008" name="BMC Genomics">
        <title>Genome-wide identification, organization and phylogenetic analysis of dicer-like, argonaute and RNA-dependent RNA polymerase gene families and their expression analysis during reproductive development and stress in rice.</title>
        <authorList>
            <person name="Kapoor M."/>
            <person name="Arora R."/>
            <person name="Lama T."/>
            <person name="Nijhawan A."/>
            <person name="Khurana J.P."/>
            <person name="Tyagi A.K."/>
            <person name="Kapoor S."/>
        </authorList>
    </citation>
    <scope>TISSUE SPECIFICITY</scope>
    <scope>GENE FAMILY</scope>
    <scope>NOMENCLATURE</scope>
</reference>
<sequence>MASRGGDGLVGGGRGPLGGRDGRGRGPAGGRGGGRGGGHPQQQQQQQPGYGRGDGGGRGPAPAAGGVVGRGTGGGGGGGRGDGGRGRGRGGGGGDGVRPAMAAAPAASTPGPVAVAARSTPPPTPAVQIPAVASSSSAQPAAAAQPPPAAAAVSALARDVGRQLAVVAGGGRPAPPAAPPAPIPVSSKGVAPPSRPGFGTVGERIVVRANHFLVRVSDNDMIYLYDVSLSPPPKTRRINRVVMSELARLHRESHLGGISFAYDGSKALYTAGKLPFDSMDFKIKLGKELREIEYKVTIRRAGQADLHHLHEFIAGRQRDSQQQTIQALDVVLRESPSLNYVIVSRSFYSTMFGRQDIGDGLECWKGYYQSLRPTQMGLSLNIDISSTPFFKPISVVEYVKNCLGTPTNANGPDPRRPLSDIDRLKVKKALRGVRVETTHQGKSSKYKITTITSEPLSQLNFSMDGTTQTVIQYFSQRYKYRLQYTSWPCLQSGNPSNPIYLPMEVCTIVEGQRYSKKLNDKQVTGLLRATCQPPQKREQKIIEMVQHNNYPADKVVSDFRINISNQMATMPARVLPAPTLRYHDSGKEKTCNPRVGQWNMINKKMVGGAVVQKWTCVNFSRMHIDAVHRLCGELVYTCNAIGMVFNEMPEIEVGSAAPNNIEAALSNIHTRAPQLQLLIVILPDVNGYYGRIKRVCETELGIVSQCLKPGRKLLSLDRQFLENVSLKINVKAGGRNSVLQRPLVPGGLENTTIIFGADVTHPASGEDSSASIAAVVASMDWPEITKYKALVSAQPPRQEIIQDLFTMTEVAQNADAPAQKAEGSKKNFICGGMFRELLMSFYSKNAKRKPQRIIFYRDGVSDGQFLHVLLYEMDAIKKAIASLDPAYRPLVTFVVVQKRHHTRLFPEVHGRQDLTDRSGNVRPGTVVDTNICHPSEFDFYLCSHAGIQGTSRPTHYHVLHDENRFSADQLQMLTYNLCYTYARCTRSVSVVPPAYYAHLAAFRARYYDEPPAMDGASSVGSGGNQAAAGGQPPAVRRLPQIKENVKDVMFYC</sequence>
<name>AGO14_ORYSJ</name>
<comment type="function">
    <text evidence="1">Probably involved in the RNA silencing pathway. May bind to short RNAs such as microRNAs (miRNAs) or short interfering RNAs (siRNAs), and represses the translation of mRNAs which are complementary to them (By similarity).</text>
</comment>
<comment type="tissue specificity">
    <text evidence="5">Expressed in seeds.</text>
</comment>
<comment type="similarity">
    <text evidence="6">Belongs to the argonaute family. Ago subfamily.</text>
</comment>